<feature type="chain" id="PRO_1000023463" description="3-dehydroquinate dehydratase">
    <location>
        <begin position="1"/>
        <end position="146"/>
    </location>
</feature>
<feature type="active site" description="Proton acceptor" evidence="1">
    <location>
        <position position="22"/>
    </location>
</feature>
<feature type="active site" description="Proton donor" evidence="1">
    <location>
        <position position="100"/>
    </location>
</feature>
<feature type="binding site" evidence="1">
    <location>
        <position position="74"/>
    </location>
    <ligand>
        <name>substrate</name>
    </ligand>
</feature>
<feature type="binding site" evidence="1">
    <location>
        <position position="80"/>
    </location>
    <ligand>
        <name>substrate</name>
    </ligand>
</feature>
<feature type="binding site" evidence="1">
    <location>
        <position position="87"/>
    </location>
    <ligand>
        <name>substrate</name>
    </ligand>
</feature>
<feature type="binding site" evidence="1">
    <location>
        <begin position="101"/>
        <end position="102"/>
    </location>
    <ligand>
        <name>substrate</name>
    </ligand>
</feature>
<feature type="binding site" evidence="1">
    <location>
        <position position="111"/>
    </location>
    <ligand>
        <name>substrate</name>
    </ligand>
</feature>
<feature type="site" description="Transition state stabilizer" evidence="1">
    <location>
        <position position="17"/>
    </location>
</feature>
<organism>
    <name type="scientific">Clostridium perfringens (strain SM101 / Type A)</name>
    <dbReference type="NCBI Taxonomy" id="289380"/>
    <lineage>
        <taxon>Bacteria</taxon>
        <taxon>Bacillati</taxon>
        <taxon>Bacillota</taxon>
        <taxon>Clostridia</taxon>
        <taxon>Eubacteriales</taxon>
        <taxon>Clostridiaceae</taxon>
        <taxon>Clostridium</taxon>
    </lineage>
</organism>
<accession>Q0SV29</accession>
<gene>
    <name evidence="1" type="primary">aroQ</name>
    <name type="ordered locus">CPR_0695</name>
</gene>
<comment type="function">
    <text evidence="1">Catalyzes a trans-dehydration via an enolate intermediate.</text>
</comment>
<comment type="catalytic activity">
    <reaction evidence="1">
        <text>3-dehydroquinate = 3-dehydroshikimate + H2O</text>
        <dbReference type="Rhea" id="RHEA:21096"/>
        <dbReference type="ChEBI" id="CHEBI:15377"/>
        <dbReference type="ChEBI" id="CHEBI:16630"/>
        <dbReference type="ChEBI" id="CHEBI:32364"/>
        <dbReference type="EC" id="4.2.1.10"/>
    </reaction>
</comment>
<comment type="pathway">
    <text evidence="1">Metabolic intermediate biosynthesis; chorismate biosynthesis; chorismate from D-erythrose 4-phosphate and phosphoenolpyruvate: step 3/7.</text>
</comment>
<comment type="subunit">
    <text evidence="1">Homododecamer.</text>
</comment>
<comment type="similarity">
    <text evidence="1">Belongs to the type-II 3-dehydroquinase family.</text>
</comment>
<proteinExistence type="inferred from homology"/>
<reference key="1">
    <citation type="journal article" date="2006" name="Genome Res.">
        <title>Skewed genomic variability in strains of the toxigenic bacterial pathogen, Clostridium perfringens.</title>
        <authorList>
            <person name="Myers G.S.A."/>
            <person name="Rasko D.A."/>
            <person name="Cheung J.K."/>
            <person name="Ravel J."/>
            <person name="Seshadri R."/>
            <person name="DeBoy R.T."/>
            <person name="Ren Q."/>
            <person name="Varga J."/>
            <person name="Awad M.M."/>
            <person name="Brinkac L.M."/>
            <person name="Daugherty S.C."/>
            <person name="Haft D.H."/>
            <person name="Dodson R.J."/>
            <person name="Madupu R."/>
            <person name="Nelson W.C."/>
            <person name="Rosovitz M.J."/>
            <person name="Sullivan S.A."/>
            <person name="Khouri H."/>
            <person name="Dimitrov G.I."/>
            <person name="Watkins K.L."/>
            <person name="Mulligan S."/>
            <person name="Benton J."/>
            <person name="Radune D."/>
            <person name="Fisher D.J."/>
            <person name="Atkins H.S."/>
            <person name="Hiscox T."/>
            <person name="Jost B.H."/>
            <person name="Billington S.J."/>
            <person name="Songer J.G."/>
            <person name="McClane B.A."/>
            <person name="Titball R.W."/>
            <person name="Rood J.I."/>
            <person name="Melville S.B."/>
            <person name="Paulsen I.T."/>
        </authorList>
    </citation>
    <scope>NUCLEOTIDE SEQUENCE [LARGE SCALE GENOMIC DNA]</scope>
    <source>
        <strain>SM101 / Type A</strain>
    </source>
</reference>
<protein>
    <recommendedName>
        <fullName evidence="1">3-dehydroquinate dehydratase</fullName>
        <shortName evidence="1">3-dehydroquinase</shortName>
        <ecNumber evidence="1">4.2.1.10</ecNumber>
    </recommendedName>
    <alternativeName>
        <fullName evidence="1">Type II DHQase</fullName>
    </alternativeName>
</protein>
<name>AROQ_CLOPS</name>
<dbReference type="EC" id="4.2.1.10" evidence="1"/>
<dbReference type="EMBL" id="CP000312">
    <property type="protein sequence ID" value="ABG85589.1"/>
    <property type="molecule type" value="Genomic_DNA"/>
</dbReference>
<dbReference type="RefSeq" id="WP_011591772.1">
    <property type="nucleotide sequence ID" value="NC_008262.1"/>
</dbReference>
<dbReference type="SMR" id="Q0SV29"/>
<dbReference type="KEGG" id="cpr:CPR_0695"/>
<dbReference type="UniPathway" id="UPA00053">
    <property type="reaction ID" value="UER00086"/>
</dbReference>
<dbReference type="Proteomes" id="UP000001824">
    <property type="component" value="Chromosome"/>
</dbReference>
<dbReference type="GO" id="GO:0003855">
    <property type="term" value="F:3-dehydroquinate dehydratase activity"/>
    <property type="evidence" value="ECO:0007669"/>
    <property type="project" value="UniProtKB-UniRule"/>
</dbReference>
<dbReference type="GO" id="GO:0008652">
    <property type="term" value="P:amino acid biosynthetic process"/>
    <property type="evidence" value="ECO:0007669"/>
    <property type="project" value="UniProtKB-KW"/>
</dbReference>
<dbReference type="GO" id="GO:0009073">
    <property type="term" value="P:aromatic amino acid family biosynthetic process"/>
    <property type="evidence" value="ECO:0007669"/>
    <property type="project" value="UniProtKB-KW"/>
</dbReference>
<dbReference type="GO" id="GO:0009423">
    <property type="term" value="P:chorismate biosynthetic process"/>
    <property type="evidence" value="ECO:0007669"/>
    <property type="project" value="UniProtKB-UniRule"/>
</dbReference>
<dbReference type="GO" id="GO:0019631">
    <property type="term" value="P:quinate catabolic process"/>
    <property type="evidence" value="ECO:0007669"/>
    <property type="project" value="TreeGrafter"/>
</dbReference>
<dbReference type="CDD" id="cd00466">
    <property type="entry name" value="DHQase_II"/>
    <property type="match status" value="1"/>
</dbReference>
<dbReference type="Gene3D" id="3.40.50.9100">
    <property type="entry name" value="Dehydroquinase, class II"/>
    <property type="match status" value="1"/>
</dbReference>
<dbReference type="HAMAP" id="MF_00169">
    <property type="entry name" value="AroQ"/>
    <property type="match status" value="1"/>
</dbReference>
<dbReference type="InterPro" id="IPR001874">
    <property type="entry name" value="DHquinase_II"/>
</dbReference>
<dbReference type="InterPro" id="IPR018509">
    <property type="entry name" value="DHquinase_II_CS"/>
</dbReference>
<dbReference type="InterPro" id="IPR036441">
    <property type="entry name" value="DHquinase_II_sf"/>
</dbReference>
<dbReference type="NCBIfam" id="TIGR01088">
    <property type="entry name" value="aroQ"/>
    <property type="match status" value="1"/>
</dbReference>
<dbReference type="NCBIfam" id="NF003805">
    <property type="entry name" value="PRK05395.1-2"/>
    <property type="match status" value="1"/>
</dbReference>
<dbReference type="NCBIfam" id="NF003806">
    <property type="entry name" value="PRK05395.1-3"/>
    <property type="match status" value="1"/>
</dbReference>
<dbReference type="NCBIfam" id="NF003807">
    <property type="entry name" value="PRK05395.1-4"/>
    <property type="match status" value="1"/>
</dbReference>
<dbReference type="PANTHER" id="PTHR21272">
    <property type="entry name" value="CATABOLIC 3-DEHYDROQUINASE"/>
    <property type="match status" value="1"/>
</dbReference>
<dbReference type="PANTHER" id="PTHR21272:SF3">
    <property type="entry name" value="CATABOLIC 3-DEHYDROQUINASE"/>
    <property type="match status" value="1"/>
</dbReference>
<dbReference type="Pfam" id="PF01220">
    <property type="entry name" value="DHquinase_II"/>
    <property type="match status" value="1"/>
</dbReference>
<dbReference type="PIRSF" id="PIRSF001399">
    <property type="entry name" value="DHquinase_II"/>
    <property type="match status" value="1"/>
</dbReference>
<dbReference type="SUPFAM" id="SSF52304">
    <property type="entry name" value="Type II 3-dehydroquinate dehydratase"/>
    <property type="match status" value="1"/>
</dbReference>
<dbReference type="PROSITE" id="PS01029">
    <property type="entry name" value="DEHYDROQUINASE_II"/>
    <property type="match status" value="1"/>
</dbReference>
<keyword id="KW-0028">Amino-acid biosynthesis</keyword>
<keyword id="KW-0057">Aromatic amino acid biosynthesis</keyword>
<keyword id="KW-0456">Lyase</keyword>
<sequence length="146" mass="16550">MKIMVINGPNLNLLGIREKEIYGAKDFNQVIDYIKEEGKELGLEINCFQSNIEGEIINFIHNAYFKKYDGIIINPGAYTHYSIAIYDALKGVEIPTVEVHLSNIHKREEFRHKSVTAPACIGQISGFGEYGYIMAMNALKKHIKSK</sequence>
<evidence type="ECO:0000255" key="1">
    <source>
        <dbReference type="HAMAP-Rule" id="MF_00169"/>
    </source>
</evidence>